<feature type="chain" id="PRO_0000205676" description="Tropomyosin">
    <location>
        <begin position="1"/>
        <end position="274"/>
    </location>
</feature>
<feature type="region of interest" description="Disordered" evidence="2">
    <location>
        <begin position="1"/>
        <end position="30"/>
    </location>
</feature>
<feature type="coiled-coil region" evidence="1">
    <location>
        <begin position="1"/>
        <end position="274"/>
    </location>
</feature>
<protein>
    <recommendedName>
        <fullName>Tropomyosin</fullName>
    </recommendedName>
    <alternativeName>
        <fullName>Allergen Pan s I</fullName>
    </alternativeName>
    <allergenName>Pan s 1</allergenName>
</protein>
<comment type="function">
    <text>Tropomyosin, in association with the troponin complex, plays a central role in the calcium dependent regulation of muscle contraction.</text>
</comment>
<comment type="subunit">
    <text evidence="1">Homodimer.</text>
</comment>
<comment type="domain">
    <text>The molecule is in a coiled coil structure that is formed by 2 polypeptide chains. The sequence exhibits a prominent seven-residues periodicity.</text>
</comment>
<comment type="allergen">
    <text>Causes an allergic reaction in human.</text>
</comment>
<comment type="similarity">
    <text evidence="3">Belongs to the tropomyosin family.</text>
</comment>
<accession>O61379</accession>
<keyword id="KW-0020">Allergen</keyword>
<keyword id="KW-0175">Coiled coil</keyword>
<keyword id="KW-0677">Repeat</keyword>
<reference key="1">
    <citation type="journal article" date="1998" name="Mol. Mar. Biol. Biotechnol.">
        <title>Molecular identification of the lobster muscle protein tropomyosin as a seafood allergen.</title>
        <authorList>
            <person name="Leung P.S.C."/>
            <person name="Chen Y.C."/>
            <person name="Mykles D.L."/>
            <person name="Chow W.K."/>
            <person name="Li C.P."/>
            <person name="Chu K.H."/>
        </authorList>
    </citation>
    <scope>NUCLEOTIDE SEQUENCE [MRNA]</scope>
    <source>
        <tissue>Skeletal muscle</tissue>
    </source>
</reference>
<organism>
    <name type="scientific">Panulirus stimpsoni</name>
    <name type="common">Chinese spiny lobster</name>
    <dbReference type="NCBI Taxonomy" id="71578"/>
    <lineage>
        <taxon>Eukaryota</taxon>
        <taxon>Metazoa</taxon>
        <taxon>Ecdysozoa</taxon>
        <taxon>Arthropoda</taxon>
        <taxon>Crustacea</taxon>
        <taxon>Multicrustacea</taxon>
        <taxon>Malacostraca</taxon>
        <taxon>Eumalacostraca</taxon>
        <taxon>Eucarida</taxon>
        <taxon>Decapoda</taxon>
        <taxon>Pleocyemata</taxon>
        <taxon>Achelata</taxon>
        <taxon>Palinuroidea</taxon>
        <taxon>Palinuridae</taxon>
        <taxon>Panulirus</taxon>
    </lineage>
</organism>
<dbReference type="EMBL" id="AF030063">
    <property type="protein sequence ID" value="AAC38996.1"/>
    <property type="molecule type" value="mRNA"/>
</dbReference>
<dbReference type="SMR" id="O61379"/>
<dbReference type="Allergome" id="3396">
    <property type="allergen name" value="Pan s 1.0101"/>
</dbReference>
<dbReference type="Allergome" id="500">
    <property type="allergen name" value="Pan s 1"/>
</dbReference>
<dbReference type="FunFam" id="1.20.5.170:FF:000005">
    <property type="entry name" value="Tropomyosin alpha-1 chain"/>
    <property type="match status" value="1"/>
</dbReference>
<dbReference type="FunFam" id="1.20.5.170:FF:000001">
    <property type="entry name" value="Tropomyosin alpha-1 chain isoform 1"/>
    <property type="match status" value="1"/>
</dbReference>
<dbReference type="FunFam" id="1.20.5.340:FF:000001">
    <property type="entry name" value="Tropomyosin alpha-1 chain isoform 2"/>
    <property type="match status" value="1"/>
</dbReference>
<dbReference type="Gene3D" id="1.20.5.170">
    <property type="match status" value="2"/>
</dbReference>
<dbReference type="Gene3D" id="1.20.5.340">
    <property type="match status" value="1"/>
</dbReference>
<dbReference type="InterPro" id="IPR000533">
    <property type="entry name" value="Tropomyosin"/>
</dbReference>
<dbReference type="PANTHER" id="PTHR19269">
    <property type="entry name" value="TROPOMYOSIN"/>
    <property type="match status" value="1"/>
</dbReference>
<dbReference type="Pfam" id="PF00261">
    <property type="entry name" value="Tropomyosin"/>
    <property type="match status" value="1"/>
</dbReference>
<dbReference type="PRINTS" id="PR00194">
    <property type="entry name" value="TROPOMYOSIN"/>
</dbReference>
<dbReference type="SUPFAM" id="SSF57997">
    <property type="entry name" value="Tropomyosin"/>
    <property type="match status" value="1"/>
</dbReference>
<dbReference type="PROSITE" id="PS00326">
    <property type="entry name" value="TROPOMYOSIN"/>
    <property type="match status" value="1"/>
</dbReference>
<proteinExistence type="evidence at protein level"/>
<name>TPM_PANST</name>
<sequence length="274" mass="31739">MKLEKDNAMDRADTLEQQNKEANIRAEKAEEEVHNLQKRMQQLENDLDQVQESLLKANTQLEEKDKALSNAEGEVAALNRRIQLLEEDLERSEERLNTATTKLAEASQAADESERMRKVLENRSLSDEERMDALENQLKEARFLAEEADRKYDEVARKLAMVEADLERAEERAETGESKFVELEEELRVVGNNLKSLEVSEEKANQREEAYKEQIKTLTNKLKAAEARAEFAERSVQKLQKEVDRLEDELVNEKEKYKSITDELDQTFSELSGY</sequence>
<evidence type="ECO:0000250" key="1"/>
<evidence type="ECO:0000256" key="2">
    <source>
        <dbReference type="SAM" id="MobiDB-lite"/>
    </source>
</evidence>
<evidence type="ECO:0000305" key="3"/>